<accession>P81243</accession>
<dbReference type="EC" id="3.1.1.4"/>
<dbReference type="SMR" id="P81243"/>
<dbReference type="GO" id="GO:0005576">
    <property type="term" value="C:extracellular region"/>
    <property type="evidence" value="ECO:0007669"/>
    <property type="project" value="UniProtKB-SubCell"/>
</dbReference>
<dbReference type="GO" id="GO:0005509">
    <property type="term" value="F:calcium ion binding"/>
    <property type="evidence" value="ECO:0007669"/>
    <property type="project" value="InterPro"/>
</dbReference>
<dbReference type="GO" id="GO:0047498">
    <property type="term" value="F:calcium-dependent phospholipase A2 activity"/>
    <property type="evidence" value="ECO:0007669"/>
    <property type="project" value="TreeGrafter"/>
</dbReference>
<dbReference type="GO" id="GO:0005543">
    <property type="term" value="F:phospholipid binding"/>
    <property type="evidence" value="ECO:0007669"/>
    <property type="project" value="TreeGrafter"/>
</dbReference>
<dbReference type="GO" id="GO:0090729">
    <property type="term" value="F:toxin activity"/>
    <property type="evidence" value="ECO:0007669"/>
    <property type="project" value="UniProtKB-KW"/>
</dbReference>
<dbReference type="GO" id="GO:0050482">
    <property type="term" value="P:arachidonate secretion"/>
    <property type="evidence" value="ECO:0007669"/>
    <property type="project" value="InterPro"/>
</dbReference>
<dbReference type="GO" id="GO:0016042">
    <property type="term" value="P:lipid catabolic process"/>
    <property type="evidence" value="ECO:0007669"/>
    <property type="project" value="UniProtKB-KW"/>
</dbReference>
<dbReference type="GO" id="GO:0042130">
    <property type="term" value="P:negative regulation of T cell proliferation"/>
    <property type="evidence" value="ECO:0007669"/>
    <property type="project" value="TreeGrafter"/>
</dbReference>
<dbReference type="GO" id="GO:0006644">
    <property type="term" value="P:phospholipid metabolic process"/>
    <property type="evidence" value="ECO:0007669"/>
    <property type="project" value="InterPro"/>
</dbReference>
<dbReference type="CDD" id="cd00125">
    <property type="entry name" value="PLA2c"/>
    <property type="match status" value="1"/>
</dbReference>
<dbReference type="FunFam" id="1.20.90.10:FF:000001">
    <property type="entry name" value="Basic phospholipase A2 homolog"/>
    <property type="match status" value="1"/>
</dbReference>
<dbReference type="Gene3D" id="1.20.90.10">
    <property type="entry name" value="Phospholipase A2 domain"/>
    <property type="match status" value="1"/>
</dbReference>
<dbReference type="InterPro" id="IPR001211">
    <property type="entry name" value="PLipase_A2"/>
</dbReference>
<dbReference type="InterPro" id="IPR033112">
    <property type="entry name" value="PLipase_A2_Asp_AS"/>
</dbReference>
<dbReference type="InterPro" id="IPR016090">
    <property type="entry name" value="PLipase_A2_dom"/>
</dbReference>
<dbReference type="InterPro" id="IPR036444">
    <property type="entry name" value="PLipase_A2_dom_sf"/>
</dbReference>
<dbReference type="InterPro" id="IPR033113">
    <property type="entry name" value="PLipase_A2_His_AS"/>
</dbReference>
<dbReference type="PANTHER" id="PTHR11716">
    <property type="entry name" value="PHOSPHOLIPASE A2 FAMILY MEMBER"/>
    <property type="match status" value="1"/>
</dbReference>
<dbReference type="PANTHER" id="PTHR11716:SF9">
    <property type="entry name" value="PHOSPHOLIPASE A2, MEMBRANE ASSOCIATED"/>
    <property type="match status" value="1"/>
</dbReference>
<dbReference type="Pfam" id="PF00068">
    <property type="entry name" value="Phospholip_A2_1"/>
    <property type="match status" value="1"/>
</dbReference>
<dbReference type="PRINTS" id="PR00389">
    <property type="entry name" value="PHPHLIPASEA2"/>
</dbReference>
<dbReference type="SMART" id="SM00085">
    <property type="entry name" value="PA2c"/>
    <property type="match status" value="1"/>
</dbReference>
<dbReference type="SUPFAM" id="SSF48619">
    <property type="entry name" value="Phospholipase A2, PLA2"/>
    <property type="match status" value="1"/>
</dbReference>
<dbReference type="PROSITE" id="PS00119">
    <property type="entry name" value="PA2_ASP"/>
    <property type="match status" value="1"/>
</dbReference>
<dbReference type="PROSITE" id="PS00118">
    <property type="entry name" value="PA2_HIS"/>
    <property type="match status" value="1"/>
</dbReference>
<proteinExistence type="evidence at protein level"/>
<evidence type="ECO:0000250" key="1"/>
<evidence type="ECO:0000255" key="2">
    <source>
        <dbReference type="PROSITE-ProRule" id="PRU10035"/>
    </source>
</evidence>
<evidence type="ECO:0000255" key="3">
    <source>
        <dbReference type="PROSITE-ProRule" id="PRU10036"/>
    </source>
</evidence>
<evidence type="ECO:0000269" key="4">
    <source>
    </source>
</evidence>
<evidence type="ECO:0000305" key="5"/>
<reference key="1">
    <citation type="journal article" date="1999" name="Arch. Biochem. Biophys.">
        <title>A novel phospholipase A2, BJ-PLA2, from the venom of the snake Bothrops jararaca: purification, primary structure analysis, and its characterization as a platelet-aggregation-inhibiting factor.</title>
        <authorList>
            <person name="Serrano S.M.T."/>
            <person name="Reichl A.P."/>
            <person name="Mentele R."/>
            <person name="Auerswald E.A."/>
            <person name="Santoro M.L."/>
            <person name="Sampaio C.A.M."/>
            <person name="Camargo A.C.M."/>
            <person name="Assakura M.T."/>
        </authorList>
    </citation>
    <scope>PROTEIN SEQUENCE</scope>
    <scope>FUNCTION</scope>
    <source>
        <tissue>Venom</tissue>
    </source>
</reference>
<keyword id="KW-0106">Calcium</keyword>
<keyword id="KW-0903">Direct protein sequencing</keyword>
<keyword id="KW-1015">Disulfide bond</keyword>
<keyword id="KW-1199">Hemostasis impairing toxin</keyword>
<keyword id="KW-0378">Hydrolase</keyword>
<keyword id="KW-0442">Lipid degradation</keyword>
<keyword id="KW-0443">Lipid metabolism</keyword>
<keyword id="KW-0479">Metal-binding</keyword>
<keyword id="KW-1201">Platelet aggregation inhibiting toxin</keyword>
<keyword id="KW-0964">Secreted</keyword>
<keyword id="KW-0800">Toxin</keyword>
<organism>
    <name type="scientific">Bothrops jararaca</name>
    <name type="common">Jararaca</name>
    <name type="synonym">Bothrops jajaraca</name>
    <dbReference type="NCBI Taxonomy" id="8724"/>
    <lineage>
        <taxon>Eukaryota</taxon>
        <taxon>Metazoa</taxon>
        <taxon>Chordata</taxon>
        <taxon>Craniata</taxon>
        <taxon>Vertebrata</taxon>
        <taxon>Euteleostomi</taxon>
        <taxon>Lepidosauria</taxon>
        <taxon>Squamata</taxon>
        <taxon>Bifurcata</taxon>
        <taxon>Unidentata</taxon>
        <taxon>Episquamata</taxon>
        <taxon>Toxicofera</taxon>
        <taxon>Serpentes</taxon>
        <taxon>Colubroidea</taxon>
        <taxon>Viperidae</taxon>
        <taxon>Crotalinae</taxon>
        <taxon>Bothrops</taxon>
    </lineage>
</organism>
<sequence>DLWQFGQMMNDVMREYVVFNYLYYGCYCGWGGIGKPRDATDRCCFVHDCCYGKVTGCNPKTDSYTYTYSEENGDVVCGGDDLCKKQICECDRVAATCFRDNKDTYDTKYWLYGAKNCQEESEPC</sequence>
<name>PA2A_BOTJA</name>
<protein>
    <recommendedName>
        <fullName>Acidic phospholipase A2</fullName>
        <shortName>svPLA2</shortName>
        <ecNumber>3.1.1.4</ecNumber>
    </recommendedName>
    <alternativeName>
        <fullName>BJ-PLA2</fullName>
    </alternativeName>
    <alternativeName>
        <fullName>Phosphatidylcholine 2-acylhydrolase</fullName>
    </alternativeName>
</protein>
<comment type="function">
    <text evidence="4">Snake venom phospholipase A2 (PLA2) that inhibits collagen- and ADP-induced platelet aggregation. PLA2 catalyzes the calcium-dependent hydrolysis of the 2-acyl groups in 3-sn-phosphoglycerides.</text>
</comment>
<comment type="catalytic activity">
    <reaction evidence="2 3">
        <text>a 1,2-diacyl-sn-glycero-3-phosphocholine + H2O = a 1-acyl-sn-glycero-3-phosphocholine + a fatty acid + H(+)</text>
        <dbReference type="Rhea" id="RHEA:15801"/>
        <dbReference type="ChEBI" id="CHEBI:15377"/>
        <dbReference type="ChEBI" id="CHEBI:15378"/>
        <dbReference type="ChEBI" id="CHEBI:28868"/>
        <dbReference type="ChEBI" id="CHEBI:57643"/>
        <dbReference type="ChEBI" id="CHEBI:58168"/>
        <dbReference type="EC" id="3.1.1.4"/>
    </reaction>
</comment>
<comment type="cofactor">
    <cofactor evidence="1">
        <name>Ca(2+)</name>
        <dbReference type="ChEBI" id="CHEBI:29108"/>
    </cofactor>
    <text evidence="1">Binds 1 Ca(2+) ion.</text>
</comment>
<comment type="subcellular location">
    <subcellularLocation>
        <location>Secreted</location>
    </subcellularLocation>
</comment>
<comment type="tissue specificity">
    <text>Expressed by the venom gland.</text>
</comment>
<comment type="similarity">
    <text evidence="5">Belongs to the phospholipase A2 family. Group II subfamily. D49 sub-subfamily.</text>
</comment>
<feature type="chain" id="PRO_0000161621" description="Acidic phospholipase A2">
    <location>
        <begin position="1"/>
        <end position="124"/>
    </location>
</feature>
<feature type="active site" evidence="1">
    <location>
        <position position="47"/>
    </location>
</feature>
<feature type="active site" evidence="1">
    <location>
        <position position="89"/>
    </location>
</feature>
<feature type="binding site" evidence="1">
    <location>
        <position position="27"/>
    </location>
    <ligand>
        <name>Ca(2+)</name>
        <dbReference type="ChEBI" id="CHEBI:29108"/>
    </ligand>
</feature>
<feature type="binding site" evidence="1">
    <location>
        <position position="29"/>
    </location>
    <ligand>
        <name>Ca(2+)</name>
        <dbReference type="ChEBI" id="CHEBI:29108"/>
    </ligand>
</feature>
<feature type="binding site" evidence="1">
    <location>
        <position position="31"/>
    </location>
    <ligand>
        <name>Ca(2+)</name>
        <dbReference type="ChEBI" id="CHEBI:29108"/>
    </ligand>
</feature>
<feature type="binding site" evidence="1">
    <location>
        <position position="48"/>
    </location>
    <ligand>
        <name>Ca(2+)</name>
        <dbReference type="ChEBI" id="CHEBI:29108"/>
    </ligand>
</feature>
<feature type="disulfide bond" evidence="1">
    <location>
        <begin position="26"/>
        <end position="117"/>
    </location>
</feature>
<feature type="disulfide bond" evidence="1">
    <location>
        <begin position="28"/>
        <end position="44"/>
    </location>
</feature>
<feature type="disulfide bond" evidence="1">
    <location>
        <begin position="43"/>
        <end position="97"/>
    </location>
</feature>
<feature type="disulfide bond" evidence="1">
    <location>
        <begin position="49"/>
        <end position="124"/>
    </location>
</feature>
<feature type="disulfide bond" evidence="1">
    <location>
        <begin position="50"/>
        <end position="90"/>
    </location>
</feature>
<feature type="disulfide bond" evidence="1">
    <location>
        <begin position="57"/>
        <end position="83"/>
    </location>
</feature>
<feature type="disulfide bond" evidence="1">
    <location>
        <begin position="77"/>
        <end position="88"/>
    </location>
</feature>